<sequence>MFKKTKITILGATGSIGDSTLAVIRETNDFEVFALTAFSNVEKLAELCQEFKPKFAVVPDLSKKQKLQSLVTDVEVLVGESGLEKVSSLAEIDIVMSAIVGIAGLKPTFAAAKAGKKILLANKESLVTAGHLLIDEVVKNNAQLIPVDSEHNAIFQCIDNHDKKCLPEIDKIILTASGGPFRDKQLHELTDVTPEQACNHPNWQMGRKISVDSSTMVNKALEVIEAYWLFSVSADKIGVLIHPQSVTHSMVRYVDGSYIAQLGVPDMKTPIANAMYYPKRGSVNVESLDFTKYQLTFREACFERFEALKIVFNNLQNKNYAANIVFNAANEELVAAFLNKKIKYLEIIEVNKKVTKELNFENPKNIEEVFEIDRKTREYVDSVLG</sequence>
<evidence type="ECO:0000255" key="1">
    <source>
        <dbReference type="HAMAP-Rule" id="MF_00183"/>
    </source>
</evidence>
<organism>
    <name type="scientific">Francisella tularensis subsp. tularensis (strain WY96-3418)</name>
    <dbReference type="NCBI Taxonomy" id="418136"/>
    <lineage>
        <taxon>Bacteria</taxon>
        <taxon>Pseudomonadati</taxon>
        <taxon>Pseudomonadota</taxon>
        <taxon>Gammaproteobacteria</taxon>
        <taxon>Thiotrichales</taxon>
        <taxon>Francisellaceae</taxon>
        <taxon>Francisella</taxon>
    </lineage>
</organism>
<gene>
    <name evidence="1" type="primary">dxr</name>
    <name type="ordered locus">FTW_0352</name>
</gene>
<name>DXR_FRATW</name>
<proteinExistence type="inferred from homology"/>
<feature type="chain" id="PRO_1000020265" description="1-deoxy-D-xylulose 5-phosphate reductoisomerase">
    <location>
        <begin position="1"/>
        <end position="385"/>
    </location>
</feature>
<feature type="binding site" evidence="1">
    <location>
        <position position="13"/>
    </location>
    <ligand>
        <name>NADPH</name>
        <dbReference type="ChEBI" id="CHEBI:57783"/>
    </ligand>
</feature>
<feature type="binding site" evidence="1">
    <location>
        <position position="14"/>
    </location>
    <ligand>
        <name>NADPH</name>
        <dbReference type="ChEBI" id="CHEBI:57783"/>
    </ligand>
</feature>
<feature type="binding site" evidence="1">
    <location>
        <position position="15"/>
    </location>
    <ligand>
        <name>NADPH</name>
        <dbReference type="ChEBI" id="CHEBI:57783"/>
    </ligand>
</feature>
<feature type="binding site" evidence="1">
    <location>
        <position position="16"/>
    </location>
    <ligand>
        <name>NADPH</name>
        <dbReference type="ChEBI" id="CHEBI:57783"/>
    </ligand>
</feature>
<feature type="binding site" evidence="1">
    <location>
        <position position="40"/>
    </location>
    <ligand>
        <name>NADPH</name>
        <dbReference type="ChEBI" id="CHEBI:57783"/>
    </ligand>
</feature>
<feature type="binding site" evidence="1">
    <location>
        <position position="122"/>
    </location>
    <ligand>
        <name>NADPH</name>
        <dbReference type="ChEBI" id="CHEBI:57783"/>
    </ligand>
</feature>
<feature type="binding site" evidence="1">
    <location>
        <position position="123"/>
    </location>
    <ligand>
        <name>1-deoxy-D-xylulose 5-phosphate</name>
        <dbReference type="ChEBI" id="CHEBI:57792"/>
    </ligand>
</feature>
<feature type="binding site" evidence="1">
    <location>
        <position position="124"/>
    </location>
    <ligand>
        <name>NADPH</name>
        <dbReference type="ChEBI" id="CHEBI:57783"/>
    </ligand>
</feature>
<feature type="binding site" evidence="1">
    <location>
        <position position="148"/>
    </location>
    <ligand>
        <name>Mn(2+)</name>
        <dbReference type="ChEBI" id="CHEBI:29035"/>
    </ligand>
</feature>
<feature type="binding site" evidence="1">
    <location>
        <position position="149"/>
    </location>
    <ligand>
        <name>1-deoxy-D-xylulose 5-phosphate</name>
        <dbReference type="ChEBI" id="CHEBI:57792"/>
    </ligand>
</feature>
<feature type="binding site" evidence="1">
    <location>
        <position position="150"/>
    </location>
    <ligand>
        <name>1-deoxy-D-xylulose 5-phosphate</name>
        <dbReference type="ChEBI" id="CHEBI:57792"/>
    </ligand>
</feature>
<feature type="binding site" evidence="1">
    <location>
        <position position="150"/>
    </location>
    <ligand>
        <name>Mn(2+)</name>
        <dbReference type="ChEBI" id="CHEBI:29035"/>
    </ligand>
</feature>
<feature type="binding site" evidence="1">
    <location>
        <position position="177"/>
    </location>
    <ligand>
        <name>1-deoxy-D-xylulose 5-phosphate</name>
        <dbReference type="ChEBI" id="CHEBI:57792"/>
    </ligand>
</feature>
<feature type="binding site" evidence="1">
    <location>
        <position position="200"/>
    </location>
    <ligand>
        <name>1-deoxy-D-xylulose 5-phosphate</name>
        <dbReference type="ChEBI" id="CHEBI:57792"/>
    </ligand>
</feature>
<feature type="binding site" evidence="1">
    <location>
        <position position="206"/>
    </location>
    <ligand>
        <name>NADPH</name>
        <dbReference type="ChEBI" id="CHEBI:57783"/>
    </ligand>
</feature>
<feature type="binding site" evidence="1">
    <location>
        <position position="213"/>
    </location>
    <ligand>
        <name>1-deoxy-D-xylulose 5-phosphate</name>
        <dbReference type="ChEBI" id="CHEBI:57792"/>
    </ligand>
</feature>
<feature type="binding site" evidence="1">
    <location>
        <position position="218"/>
    </location>
    <ligand>
        <name>1-deoxy-D-xylulose 5-phosphate</name>
        <dbReference type="ChEBI" id="CHEBI:57792"/>
    </ligand>
</feature>
<feature type="binding site" evidence="1">
    <location>
        <position position="219"/>
    </location>
    <ligand>
        <name>1-deoxy-D-xylulose 5-phosphate</name>
        <dbReference type="ChEBI" id="CHEBI:57792"/>
    </ligand>
</feature>
<feature type="binding site" evidence="1">
    <location>
        <position position="222"/>
    </location>
    <ligand>
        <name>1-deoxy-D-xylulose 5-phosphate</name>
        <dbReference type="ChEBI" id="CHEBI:57792"/>
    </ligand>
</feature>
<feature type="binding site" evidence="1">
    <location>
        <position position="222"/>
    </location>
    <ligand>
        <name>Mn(2+)</name>
        <dbReference type="ChEBI" id="CHEBI:29035"/>
    </ligand>
</feature>
<keyword id="KW-0414">Isoprene biosynthesis</keyword>
<keyword id="KW-0464">Manganese</keyword>
<keyword id="KW-0479">Metal-binding</keyword>
<keyword id="KW-0521">NADP</keyword>
<keyword id="KW-0560">Oxidoreductase</keyword>
<comment type="function">
    <text evidence="1">Catalyzes the NADPH-dependent rearrangement and reduction of 1-deoxy-D-xylulose-5-phosphate (DXP) to 2-C-methyl-D-erythritol 4-phosphate (MEP).</text>
</comment>
<comment type="catalytic activity">
    <reaction evidence="1">
        <text>2-C-methyl-D-erythritol 4-phosphate + NADP(+) = 1-deoxy-D-xylulose 5-phosphate + NADPH + H(+)</text>
        <dbReference type="Rhea" id="RHEA:13717"/>
        <dbReference type="ChEBI" id="CHEBI:15378"/>
        <dbReference type="ChEBI" id="CHEBI:57783"/>
        <dbReference type="ChEBI" id="CHEBI:57792"/>
        <dbReference type="ChEBI" id="CHEBI:58262"/>
        <dbReference type="ChEBI" id="CHEBI:58349"/>
        <dbReference type="EC" id="1.1.1.267"/>
    </reaction>
    <physiologicalReaction direction="right-to-left" evidence="1">
        <dbReference type="Rhea" id="RHEA:13719"/>
    </physiologicalReaction>
</comment>
<comment type="cofactor">
    <cofactor evidence="1">
        <name>Mg(2+)</name>
        <dbReference type="ChEBI" id="CHEBI:18420"/>
    </cofactor>
    <cofactor evidence="1">
        <name>Mn(2+)</name>
        <dbReference type="ChEBI" id="CHEBI:29035"/>
    </cofactor>
</comment>
<comment type="pathway">
    <text evidence="1">Isoprenoid biosynthesis; isopentenyl diphosphate biosynthesis via DXP pathway; isopentenyl diphosphate from 1-deoxy-D-xylulose 5-phosphate: step 1/6.</text>
</comment>
<comment type="similarity">
    <text evidence="1">Belongs to the DXR family.</text>
</comment>
<accession>A4IWJ1</accession>
<protein>
    <recommendedName>
        <fullName evidence="1">1-deoxy-D-xylulose 5-phosphate reductoisomerase</fullName>
        <shortName evidence="1">DXP reductoisomerase</shortName>
        <ecNumber evidence="1">1.1.1.267</ecNumber>
    </recommendedName>
    <alternativeName>
        <fullName evidence="1">1-deoxyxylulose-5-phosphate reductoisomerase</fullName>
    </alternativeName>
    <alternativeName>
        <fullName evidence="1">2-C-methyl-D-erythritol 4-phosphate synthase</fullName>
    </alternativeName>
</protein>
<reference key="1">
    <citation type="journal article" date="2007" name="PLoS ONE">
        <title>Complete genomic characterization of a pathogenic A.II strain of Francisella tularensis subspecies tularensis.</title>
        <authorList>
            <person name="Beckstrom-Sternberg S.M."/>
            <person name="Auerbach R.K."/>
            <person name="Godbole S."/>
            <person name="Pearson J.V."/>
            <person name="Beckstrom-Sternberg J.S."/>
            <person name="Deng Z."/>
            <person name="Munk C."/>
            <person name="Kubota K."/>
            <person name="Zhou Y."/>
            <person name="Bruce D."/>
            <person name="Noronha J."/>
            <person name="Scheuermann R.H."/>
            <person name="Wang A."/>
            <person name="Wei X."/>
            <person name="Wang J."/>
            <person name="Hao J."/>
            <person name="Wagner D.M."/>
            <person name="Brettin T.S."/>
            <person name="Brown N."/>
            <person name="Gilna P."/>
            <person name="Keim P.S."/>
        </authorList>
    </citation>
    <scope>NUCLEOTIDE SEQUENCE [LARGE SCALE GENOMIC DNA]</scope>
    <source>
        <strain>WY96-3418</strain>
    </source>
</reference>
<dbReference type="EC" id="1.1.1.267" evidence="1"/>
<dbReference type="EMBL" id="CP000608">
    <property type="protein sequence ID" value="ABO46293.1"/>
    <property type="molecule type" value="Genomic_DNA"/>
</dbReference>
<dbReference type="RefSeq" id="WP_003018074.1">
    <property type="nucleotide sequence ID" value="NC_009257.1"/>
</dbReference>
<dbReference type="SMR" id="A4IWJ1"/>
<dbReference type="KEGG" id="ftw:FTW_0352"/>
<dbReference type="HOGENOM" id="CLU_035714_4_0_6"/>
<dbReference type="UniPathway" id="UPA00056">
    <property type="reaction ID" value="UER00092"/>
</dbReference>
<dbReference type="GO" id="GO:0030604">
    <property type="term" value="F:1-deoxy-D-xylulose-5-phosphate reductoisomerase activity"/>
    <property type="evidence" value="ECO:0007669"/>
    <property type="project" value="UniProtKB-UniRule"/>
</dbReference>
<dbReference type="GO" id="GO:0030145">
    <property type="term" value="F:manganese ion binding"/>
    <property type="evidence" value="ECO:0007669"/>
    <property type="project" value="TreeGrafter"/>
</dbReference>
<dbReference type="GO" id="GO:0070402">
    <property type="term" value="F:NADPH binding"/>
    <property type="evidence" value="ECO:0007669"/>
    <property type="project" value="InterPro"/>
</dbReference>
<dbReference type="GO" id="GO:0051484">
    <property type="term" value="P:isopentenyl diphosphate biosynthetic process, methylerythritol 4-phosphate pathway involved in terpenoid biosynthetic process"/>
    <property type="evidence" value="ECO:0007669"/>
    <property type="project" value="TreeGrafter"/>
</dbReference>
<dbReference type="FunFam" id="3.40.50.720:FF:000045">
    <property type="entry name" value="1-deoxy-D-xylulose 5-phosphate reductoisomerase"/>
    <property type="match status" value="1"/>
</dbReference>
<dbReference type="Gene3D" id="1.10.1740.10">
    <property type="match status" value="1"/>
</dbReference>
<dbReference type="Gene3D" id="3.40.50.720">
    <property type="entry name" value="NAD(P)-binding Rossmann-like Domain"/>
    <property type="match status" value="1"/>
</dbReference>
<dbReference type="HAMAP" id="MF_00183">
    <property type="entry name" value="DXP_reductoisom"/>
    <property type="match status" value="1"/>
</dbReference>
<dbReference type="InterPro" id="IPR003821">
    <property type="entry name" value="DXP_reductoisomerase"/>
</dbReference>
<dbReference type="InterPro" id="IPR013644">
    <property type="entry name" value="DXP_reductoisomerase_C"/>
</dbReference>
<dbReference type="InterPro" id="IPR013512">
    <property type="entry name" value="DXP_reductoisomerase_N"/>
</dbReference>
<dbReference type="InterPro" id="IPR026877">
    <property type="entry name" value="DXPR_C"/>
</dbReference>
<dbReference type="InterPro" id="IPR036169">
    <property type="entry name" value="DXPR_C_sf"/>
</dbReference>
<dbReference type="InterPro" id="IPR036291">
    <property type="entry name" value="NAD(P)-bd_dom_sf"/>
</dbReference>
<dbReference type="NCBIfam" id="TIGR00243">
    <property type="entry name" value="Dxr"/>
    <property type="match status" value="1"/>
</dbReference>
<dbReference type="PANTHER" id="PTHR30525">
    <property type="entry name" value="1-DEOXY-D-XYLULOSE 5-PHOSPHATE REDUCTOISOMERASE"/>
    <property type="match status" value="1"/>
</dbReference>
<dbReference type="PANTHER" id="PTHR30525:SF0">
    <property type="entry name" value="1-DEOXY-D-XYLULOSE 5-PHOSPHATE REDUCTOISOMERASE, CHLOROPLASTIC"/>
    <property type="match status" value="1"/>
</dbReference>
<dbReference type="Pfam" id="PF08436">
    <property type="entry name" value="DXP_redisom_C"/>
    <property type="match status" value="1"/>
</dbReference>
<dbReference type="Pfam" id="PF02670">
    <property type="entry name" value="DXP_reductoisom"/>
    <property type="match status" value="1"/>
</dbReference>
<dbReference type="Pfam" id="PF13288">
    <property type="entry name" value="DXPR_C"/>
    <property type="match status" value="1"/>
</dbReference>
<dbReference type="PIRSF" id="PIRSF006205">
    <property type="entry name" value="Dxp_reductismrs"/>
    <property type="match status" value="1"/>
</dbReference>
<dbReference type="SUPFAM" id="SSF69055">
    <property type="entry name" value="1-deoxy-D-xylulose-5-phosphate reductoisomerase, C-terminal domain"/>
    <property type="match status" value="1"/>
</dbReference>
<dbReference type="SUPFAM" id="SSF55347">
    <property type="entry name" value="Glyceraldehyde-3-phosphate dehydrogenase-like, C-terminal domain"/>
    <property type="match status" value="1"/>
</dbReference>
<dbReference type="SUPFAM" id="SSF51735">
    <property type="entry name" value="NAD(P)-binding Rossmann-fold domains"/>
    <property type="match status" value="1"/>
</dbReference>